<keyword id="KW-0997">Cell inner membrane</keyword>
<keyword id="KW-1003">Cell membrane</keyword>
<keyword id="KW-0472">Membrane</keyword>
<keyword id="KW-0812">Transmembrane</keyword>
<keyword id="KW-1133">Transmembrane helix</keyword>
<sequence>MKFLFDLFPIILFFAAFKVWGIFTATAVAIVATLAQVAWVAFRHRKVDTMLWVSLGVIVVFGGATLVLHDEKFIQWKPTVLYWLFAIGLLAARYAFGNNLIEKMMGKQLTLPHPVWDKLNVAWALFFAVLGVANLYVVHNYTESQWVNFKLFGTTGAMVVFIILQSLWLTKYLKDE</sequence>
<organism>
    <name type="scientific">Burkholderia ambifaria (strain MC40-6)</name>
    <dbReference type="NCBI Taxonomy" id="398577"/>
    <lineage>
        <taxon>Bacteria</taxon>
        <taxon>Pseudomonadati</taxon>
        <taxon>Pseudomonadota</taxon>
        <taxon>Betaproteobacteria</taxon>
        <taxon>Burkholderiales</taxon>
        <taxon>Burkholderiaceae</taxon>
        <taxon>Burkholderia</taxon>
        <taxon>Burkholderia cepacia complex</taxon>
    </lineage>
</organism>
<dbReference type="EMBL" id="CP001025">
    <property type="protein sequence ID" value="ACB64311.1"/>
    <property type="molecule type" value="Genomic_DNA"/>
</dbReference>
<dbReference type="RefSeq" id="WP_006753406.1">
    <property type="nucleotide sequence ID" value="NC_010551.1"/>
</dbReference>
<dbReference type="KEGG" id="bac:BamMC406_1828"/>
<dbReference type="HOGENOM" id="CLU_089554_2_0_4"/>
<dbReference type="OrthoDB" id="9788219at2"/>
<dbReference type="Proteomes" id="UP000001680">
    <property type="component" value="Chromosome 1"/>
</dbReference>
<dbReference type="GO" id="GO:0005886">
    <property type="term" value="C:plasma membrane"/>
    <property type="evidence" value="ECO:0007669"/>
    <property type="project" value="UniProtKB-SubCell"/>
</dbReference>
<dbReference type="HAMAP" id="MF_00189">
    <property type="entry name" value="YciB"/>
    <property type="match status" value="1"/>
</dbReference>
<dbReference type="InterPro" id="IPR006008">
    <property type="entry name" value="YciB"/>
</dbReference>
<dbReference type="NCBIfam" id="TIGR00997">
    <property type="entry name" value="ispZ"/>
    <property type="match status" value="1"/>
</dbReference>
<dbReference type="NCBIfam" id="NF001325">
    <property type="entry name" value="PRK00259.1-3"/>
    <property type="match status" value="1"/>
</dbReference>
<dbReference type="PANTHER" id="PTHR36917:SF1">
    <property type="entry name" value="INNER MEMBRANE-SPANNING PROTEIN YCIB"/>
    <property type="match status" value="1"/>
</dbReference>
<dbReference type="PANTHER" id="PTHR36917">
    <property type="entry name" value="INTRACELLULAR SEPTATION PROTEIN A-RELATED"/>
    <property type="match status" value="1"/>
</dbReference>
<dbReference type="Pfam" id="PF04279">
    <property type="entry name" value="IspA"/>
    <property type="match status" value="1"/>
</dbReference>
<reference key="1">
    <citation type="submission" date="2008-04" db="EMBL/GenBank/DDBJ databases">
        <title>Complete sequence of chromosome 1 of Burkholderia ambifaria MC40-6.</title>
        <authorList>
            <person name="Copeland A."/>
            <person name="Lucas S."/>
            <person name="Lapidus A."/>
            <person name="Glavina del Rio T."/>
            <person name="Dalin E."/>
            <person name="Tice H."/>
            <person name="Pitluck S."/>
            <person name="Chain P."/>
            <person name="Malfatti S."/>
            <person name="Shin M."/>
            <person name="Vergez L."/>
            <person name="Lang D."/>
            <person name="Schmutz J."/>
            <person name="Larimer F."/>
            <person name="Land M."/>
            <person name="Hauser L."/>
            <person name="Kyrpides N."/>
            <person name="Lykidis A."/>
            <person name="Ramette A."/>
            <person name="Konstantinidis K."/>
            <person name="Tiedje J."/>
            <person name="Richardson P."/>
        </authorList>
    </citation>
    <scope>NUCLEOTIDE SEQUENCE [LARGE SCALE GENOMIC DNA]</scope>
    <source>
        <strain>MC40-6</strain>
    </source>
</reference>
<protein>
    <recommendedName>
        <fullName evidence="1">Inner membrane-spanning protein YciB</fullName>
    </recommendedName>
</protein>
<accession>B1YRY2</accession>
<feature type="chain" id="PRO_1000098871" description="Inner membrane-spanning protein YciB">
    <location>
        <begin position="1"/>
        <end position="176"/>
    </location>
</feature>
<feature type="transmembrane region" description="Helical" evidence="1">
    <location>
        <begin position="3"/>
        <end position="23"/>
    </location>
</feature>
<feature type="transmembrane region" description="Helical" evidence="1">
    <location>
        <begin position="24"/>
        <end position="44"/>
    </location>
</feature>
<feature type="transmembrane region" description="Helical" evidence="1">
    <location>
        <begin position="49"/>
        <end position="69"/>
    </location>
</feature>
<feature type="transmembrane region" description="Helical" evidence="1">
    <location>
        <begin position="81"/>
        <end position="101"/>
    </location>
</feature>
<feature type="transmembrane region" description="Helical" evidence="1">
    <location>
        <begin position="119"/>
        <end position="139"/>
    </location>
</feature>
<feature type="transmembrane region" description="Helical" evidence="1">
    <location>
        <begin position="149"/>
        <end position="169"/>
    </location>
</feature>
<evidence type="ECO:0000255" key="1">
    <source>
        <dbReference type="HAMAP-Rule" id="MF_00189"/>
    </source>
</evidence>
<comment type="function">
    <text evidence="1">Plays a role in cell envelope biogenesis, maintenance of cell envelope integrity and membrane homeostasis.</text>
</comment>
<comment type="subcellular location">
    <subcellularLocation>
        <location evidence="1">Cell inner membrane</location>
        <topology evidence="1">Multi-pass membrane protein</topology>
    </subcellularLocation>
</comment>
<comment type="similarity">
    <text evidence="1">Belongs to the YciB family.</text>
</comment>
<gene>
    <name evidence="1" type="primary">yciB</name>
    <name type="ordered locus">BamMC406_1828</name>
</gene>
<name>YCIB_BURA4</name>
<proteinExistence type="inferred from homology"/>